<organism>
    <name type="scientific">Dianthus monspessulanus</name>
    <dbReference type="NCBI Taxonomy" id="129769"/>
    <lineage>
        <taxon>Eukaryota</taxon>
        <taxon>Viridiplantae</taxon>
        <taxon>Streptophyta</taxon>
        <taxon>Embryophyta</taxon>
        <taxon>Tracheophyta</taxon>
        <taxon>Spermatophyta</taxon>
        <taxon>Magnoliopsida</taxon>
        <taxon>eudicotyledons</taxon>
        <taxon>Gunneridae</taxon>
        <taxon>Pentapetalae</taxon>
        <taxon>Caryophyllales</taxon>
        <taxon>Caryophyllaceae</taxon>
        <taxon>Caryophylleae</taxon>
        <taxon>Dianthus</taxon>
    </lineage>
</organism>
<gene>
    <name type="primary">CHS</name>
</gene>
<sequence>MASIEEIRQAQRADGPATILAIGTATPPNAIYQADYPDYYFRVTKSEHMTELKEKFRRMCDKSMIKKRYMYLTEEILKENPNLCEYMGSSLDTRQDMVVSEVPRLGKEAAVKAIKEWGQPKSKITHVIMCTTSGVDMPGADYQLTKLLGLRPSVRRFMLYQQGCFAGGTVLRLAKDLAENNKGARVLVVCSEITAICFRGPTEAALDSMVGQALFGDGAGALIVGSDPDLSIERPLFQMAWAGQTLLPDSEGAIDGHLREVGLTFHLLKDVPGIISKNITNALEEAFSPIGVSDWNNLFWIAHPGGPAILDQVEAKLGLKEEKLAATRNVLSDFGNMSSACVLFILDEMRKKSLRDGATTTGEGLDWGVLFGFGPGLTVETVVLHSVPLNC</sequence>
<keyword id="KW-0012">Acyltransferase</keyword>
<keyword id="KW-0284">Flavonoid biosynthesis</keyword>
<keyword id="KW-0808">Transferase</keyword>
<accession>Q9LKP7</accession>
<evidence type="ECO:0000255" key="1">
    <source>
        <dbReference type="PROSITE-ProRule" id="PRU10023"/>
    </source>
</evidence>
<evidence type="ECO:0000305" key="2"/>
<reference key="1">
    <citation type="submission" date="2000-05" db="EMBL/GenBank/DDBJ databases">
        <title>Molecular cloning of chalcone synthase cDNA from Dianthus monspessulanus.</title>
        <authorList>
            <person name="Yagishita Y."/>
            <person name="Ohya T."/>
            <person name="Kaminishi A."/>
            <person name="Nomura K."/>
            <person name="Kita N."/>
        </authorList>
    </citation>
    <scope>NUCLEOTIDE SEQUENCE [MRNA]</scope>
</reference>
<comment type="function">
    <text>The primary product of this enzyme is 4,2',4',6'-tetrahydroxychalcone (also termed naringenin-chalcone or chalcone) which can under specific conditions spontaneously isomerize into naringenin.</text>
</comment>
<comment type="catalytic activity">
    <reaction evidence="1">
        <text>(E)-4-coumaroyl-CoA + 3 malonyl-CoA + 3 H(+) = 2',4,4',6'-tetrahydroxychalcone + 3 CO2 + 4 CoA</text>
        <dbReference type="Rhea" id="RHEA:11128"/>
        <dbReference type="ChEBI" id="CHEBI:15378"/>
        <dbReference type="ChEBI" id="CHEBI:15413"/>
        <dbReference type="ChEBI" id="CHEBI:16526"/>
        <dbReference type="ChEBI" id="CHEBI:57287"/>
        <dbReference type="ChEBI" id="CHEBI:57384"/>
        <dbReference type="ChEBI" id="CHEBI:85008"/>
        <dbReference type="EC" id="2.3.1.74"/>
    </reaction>
</comment>
<comment type="pathway">
    <text>Secondary metabolite biosynthesis; flavonoid biosynthesis.</text>
</comment>
<comment type="similarity">
    <text evidence="2">Belongs to the thiolase-like superfamily. Chalcone/stilbene synthases family.</text>
</comment>
<dbReference type="EC" id="2.3.1.74"/>
<dbReference type="EMBL" id="AF267173">
    <property type="protein sequence ID" value="AAF81743.1"/>
    <property type="molecule type" value="mRNA"/>
</dbReference>
<dbReference type="SMR" id="Q9LKP7"/>
<dbReference type="UniPathway" id="UPA00154"/>
<dbReference type="GO" id="GO:0016210">
    <property type="term" value="F:naringenin-chalcone synthase activity"/>
    <property type="evidence" value="ECO:0007669"/>
    <property type="project" value="UniProtKB-EC"/>
</dbReference>
<dbReference type="GO" id="GO:0009813">
    <property type="term" value="P:flavonoid biosynthetic process"/>
    <property type="evidence" value="ECO:0007669"/>
    <property type="project" value="UniProtKB-UniPathway"/>
</dbReference>
<dbReference type="GO" id="GO:0030639">
    <property type="term" value="P:polyketide biosynthetic process"/>
    <property type="evidence" value="ECO:0007669"/>
    <property type="project" value="TreeGrafter"/>
</dbReference>
<dbReference type="CDD" id="cd00831">
    <property type="entry name" value="CHS_like"/>
    <property type="match status" value="1"/>
</dbReference>
<dbReference type="FunFam" id="3.40.47.10:FF:000014">
    <property type="entry name" value="Chalcone synthase 1"/>
    <property type="match status" value="1"/>
</dbReference>
<dbReference type="FunFam" id="3.40.47.10:FF:000025">
    <property type="entry name" value="Chalcone synthase 2"/>
    <property type="match status" value="1"/>
</dbReference>
<dbReference type="Gene3D" id="3.40.47.10">
    <property type="match status" value="2"/>
</dbReference>
<dbReference type="InterPro" id="IPR012328">
    <property type="entry name" value="Chalcone/stilbene_synt_C"/>
</dbReference>
<dbReference type="InterPro" id="IPR001099">
    <property type="entry name" value="Chalcone/stilbene_synt_N"/>
</dbReference>
<dbReference type="InterPro" id="IPR018088">
    <property type="entry name" value="Chalcone/stilbene_synthase_AS"/>
</dbReference>
<dbReference type="InterPro" id="IPR011141">
    <property type="entry name" value="Polyketide_synthase_type-III"/>
</dbReference>
<dbReference type="InterPro" id="IPR016039">
    <property type="entry name" value="Thiolase-like"/>
</dbReference>
<dbReference type="PANTHER" id="PTHR11877:SF14">
    <property type="entry name" value="CHALCONE SYNTHASE"/>
    <property type="match status" value="1"/>
</dbReference>
<dbReference type="PANTHER" id="PTHR11877">
    <property type="entry name" value="HYDROXYMETHYLGLUTARYL-COA SYNTHASE"/>
    <property type="match status" value="1"/>
</dbReference>
<dbReference type="Pfam" id="PF02797">
    <property type="entry name" value="Chal_sti_synt_C"/>
    <property type="match status" value="1"/>
</dbReference>
<dbReference type="Pfam" id="PF00195">
    <property type="entry name" value="Chal_sti_synt_N"/>
    <property type="match status" value="1"/>
</dbReference>
<dbReference type="PIRSF" id="PIRSF000451">
    <property type="entry name" value="PKS_III"/>
    <property type="match status" value="1"/>
</dbReference>
<dbReference type="SUPFAM" id="SSF53901">
    <property type="entry name" value="Thiolase-like"/>
    <property type="match status" value="2"/>
</dbReference>
<dbReference type="PROSITE" id="PS00441">
    <property type="entry name" value="CHALCONE_SYNTH"/>
    <property type="match status" value="1"/>
</dbReference>
<feature type="chain" id="PRO_0000215974" description="Chalcone synthase">
    <location>
        <begin position="1"/>
        <end position="391"/>
    </location>
</feature>
<feature type="active site" evidence="1">
    <location>
        <position position="164"/>
    </location>
</feature>
<name>CHSY_DIAMO</name>
<protein>
    <recommendedName>
        <fullName>Chalcone synthase</fullName>
        <ecNumber>2.3.1.74</ecNumber>
    </recommendedName>
    <alternativeName>
        <fullName>Naringenin-chalcone synthase</fullName>
    </alternativeName>
</protein>
<proteinExistence type="evidence at transcript level"/>